<sequence>MKLPGQEELEAACACENVPVGQLDSGPSSGPCPDDPSDTGSRELGPPEDPPLFLQLNELLGWPQTLEWREMGRWVLFEEKLEVDAGRWSAPHVPTLALPSLQNLRSLLAEGLVLLDCPAQNLLELVEQVTRVESLSPELRGQLQALLLQRPQHHTQTTGSRPCWGPAQSRKAAHNKEAPMQQQCQSPLRQKLPPGAEAGAVLAGELGFLAQPLAAFVRLRDPVWLGPLTEVPLPSRFFCLLLGPPMLGKGYHELGRAAAVLLSDPHFQWSVRRASNLHDLLTALDAFLEEVTVLPPGRWDPTARIPPPRCLPSRHKRPPLHLQKVKGLSVPHRTQAEDRHRNGPLAPSPELQRTGRLFGGLVQDVRRKASWYPSDFSDALHPQCVSAVLYIYLATVTNAITFGGLLGDATDGAQGVLESLLGTAVAGAAFCLMAGQPLTVLSSTGPVLVFERLLFAFCRDYSLDYLPFRLWVGIWVAVFCLALVATEASVLVRYFTRFTEEGFCALISLIFIYDAVGKMLNLAHAYPIQRPGSLAYGCLCQFPGPGGNESQWTRPRPQSRDDLLSVDLGLVNASLLPPHECVQQGGYPRGPGCHTVPDIAFFSLLLFLTSFLFAIALKHMKTSRFFPSVVRKVLSDFSSILAILLGCGLDALLGLAMPKLMVPREFKPTLPGRGWLVPPFGANPWWLSVAAALPALLLSILIFMDQQITAVILNRVEYRLRKGAGFHLDLFCVALLMLLTSVLGLPWYVSATVLSLAHMDSLRRESRACAPGEPHSFLGIREQRLTGLAVFTLTGVSIFLAPVLKFIPMPVLYGIFLYMGVAALSSIQFMKRVQLMLMPAKHQPDLLLLRHVPLSRVHLFTAIQLACLGLLWIIKSTPAAIIFPLMLLGLVGVRKALEWVFSPQELLWLDELMPEEERNVPEKGLEPGHSFSGSDSEDSELMYQPKAPEINISVN</sequence>
<dbReference type="EMBL" id="AB038263">
    <property type="protein sequence ID" value="BAB18935.1"/>
    <property type="molecule type" value="mRNA"/>
</dbReference>
<dbReference type="EMBL" id="AB038264">
    <property type="protein sequence ID" value="BAB18936.1"/>
    <property type="molecule type" value="mRNA"/>
</dbReference>
<dbReference type="RefSeq" id="NP_001075474.1">
    <molecule id="Q9GKY1-1"/>
    <property type="nucleotide sequence ID" value="NM_001082005.1"/>
</dbReference>
<dbReference type="SMR" id="Q9GKY1"/>
<dbReference type="FunCoup" id="Q9GKY1">
    <property type="interactions" value="14"/>
</dbReference>
<dbReference type="STRING" id="9986.ENSOCUP00000013683"/>
<dbReference type="TCDB" id="2.A.31.2.5">
    <property type="family name" value="the anion exchanger (ae) family"/>
</dbReference>
<dbReference type="GlyCosmos" id="Q9GKY1">
    <property type="glycosylation" value="2 sites, No reported glycans"/>
</dbReference>
<dbReference type="PaxDb" id="9986-ENSOCUP00000013683"/>
<dbReference type="GeneID" id="100008621"/>
<dbReference type="KEGG" id="ocu:100008621"/>
<dbReference type="CTD" id="83697"/>
<dbReference type="eggNOG" id="KOG1172">
    <property type="taxonomic scope" value="Eukaryota"/>
</dbReference>
<dbReference type="InParanoid" id="Q9GKY1"/>
<dbReference type="OrthoDB" id="1735926at2759"/>
<dbReference type="Proteomes" id="UP000001811">
    <property type="component" value="Unplaced"/>
</dbReference>
<dbReference type="GO" id="GO:0016324">
    <property type="term" value="C:apical plasma membrane"/>
    <property type="evidence" value="ECO:0007669"/>
    <property type="project" value="UniProtKB-SubCell"/>
</dbReference>
<dbReference type="GO" id="GO:0016323">
    <property type="term" value="C:basolateral plasma membrane"/>
    <property type="evidence" value="ECO:0007669"/>
    <property type="project" value="UniProtKB-SubCell"/>
</dbReference>
<dbReference type="GO" id="GO:0016328">
    <property type="term" value="C:lateral plasma membrane"/>
    <property type="evidence" value="ECO:0000314"/>
    <property type="project" value="UniProtKB"/>
</dbReference>
<dbReference type="GO" id="GO:0140900">
    <property type="term" value="F:chloride:bicarbonate antiporter activity"/>
    <property type="evidence" value="ECO:0000314"/>
    <property type="project" value="UniProtKB"/>
</dbReference>
<dbReference type="GO" id="GO:0008510">
    <property type="term" value="F:sodium:bicarbonate symporter activity"/>
    <property type="evidence" value="ECO:0000250"/>
    <property type="project" value="UniProtKB"/>
</dbReference>
<dbReference type="GO" id="GO:0051453">
    <property type="term" value="P:regulation of intracellular pH"/>
    <property type="evidence" value="ECO:0007669"/>
    <property type="project" value="TreeGrafter"/>
</dbReference>
<dbReference type="GO" id="GO:0035725">
    <property type="term" value="P:sodium ion transmembrane transport"/>
    <property type="evidence" value="ECO:0000250"/>
    <property type="project" value="UniProtKB"/>
</dbReference>
<dbReference type="FunFam" id="1.10.287.570:FF:000001">
    <property type="entry name" value="Anion exchange protein"/>
    <property type="match status" value="1"/>
</dbReference>
<dbReference type="FunFam" id="3.40.930.10:FF:000011">
    <property type="entry name" value="Anion exchange protein 4"/>
    <property type="match status" value="1"/>
</dbReference>
<dbReference type="Gene3D" id="1.10.287.570">
    <property type="entry name" value="Helical hairpin bin"/>
    <property type="match status" value="1"/>
</dbReference>
<dbReference type="Gene3D" id="3.40.930.10">
    <property type="entry name" value="Mannitol-specific EII, Chain A"/>
    <property type="match status" value="1"/>
</dbReference>
<dbReference type="InterPro" id="IPR013769">
    <property type="entry name" value="Band3_cytoplasmic_dom"/>
</dbReference>
<dbReference type="InterPro" id="IPR011531">
    <property type="entry name" value="HCO3_transpt-like_TM_dom"/>
</dbReference>
<dbReference type="InterPro" id="IPR003020">
    <property type="entry name" value="HCO3_transpt_euk"/>
</dbReference>
<dbReference type="InterPro" id="IPR003024">
    <property type="entry name" value="Na/HCO3_transpt"/>
</dbReference>
<dbReference type="InterPro" id="IPR016152">
    <property type="entry name" value="PTrfase/Anion_transptr"/>
</dbReference>
<dbReference type="NCBIfam" id="TIGR00834">
    <property type="entry name" value="ae"/>
    <property type="match status" value="1"/>
</dbReference>
<dbReference type="PANTHER" id="PTHR11453">
    <property type="entry name" value="ANION EXCHANGE PROTEIN"/>
    <property type="match status" value="1"/>
</dbReference>
<dbReference type="PANTHER" id="PTHR11453:SF52">
    <property type="entry name" value="ANION EXCHANGE PROTEIN 4"/>
    <property type="match status" value="1"/>
</dbReference>
<dbReference type="Pfam" id="PF07565">
    <property type="entry name" value="Band_3_cyto"/>
    <property type="match status" value="2"/>
</dbReference>
<dbReference type="Pfam" id="PF00955">
    <property type="entry name" value="HCO3_cotransp"/>
    <property type="match status" value="1"/>
</dbReference>
<dbReference type="PRINTS" id="PR01231">
    <property type="entry name" value="HCO3TRNSPORT"/>
</dbReference>
<dbReference type="PRINTS" id="PR01232">
    <property type="entry name" value="NAHCO3TRSPRT"/>
</dbReference>
<dbReference type="SUPFAM" id="SSF55804">
    <property type="entry name" value="Phoshotransferase/anion transport protein"/>
    <property type="match status" value="1"/>
</dbReference>
<name>B3A4_RABIT</name>
<gene>
    <name evidence="2" type="primary">SLC4A9</name>
    <name type="synonym">AE4</name>
</gene>
<comment type="function">
    <text evidence="1 5">Electroneutral Cl(-)/HCO3(-) antiporter that favors chloride ion entry and efflux of hydrogencarbonate and sodium ion across the basolateral membrane and may participat in salivary secretion (PubMed:11102437). Also mediates Cl(-)/HCO3(-) exchange activity in the presence of K(+) as well as Cs(+), Li(+), and Rb(+). Does not contribute to Cl(-)/HCO3(-) exchanger in the apical membrane of the upper villous epithelium (By similarity).</text>
</comment>
<comment type="catalytic activity">
    <reaction evidence="1">
        <text>2 hydrogencarbonate(out) + chloride(in) + Na(+)(out) = 2 hydrogencarbonate(in) + chloride(out) + Na(+)(in)</text>
        <dbReference type="Rhea" id="RHEA:72739"/>
        <dbReference type="ChEBI" id="CHEBI:17544"/>
        <dbReference type="ChEBI" id="CHEBI:17996"/>
        <dbReference type="ChEBI" id="CHEBI:29101"/>
    </reaction>
</comment>
<comment type="catalytic activity">
    <reaction evidence="1">
        <text>K(+)(in) + 2 hydrogencarbonate(in) + chloride(out) = K(+)(out) + 2 hydrogencarbonate(out) + chloride(in)</text>
        <dbReference type="Rhea" id="RHEA:75059"/>
        <dbReference type="ChEBI" id="CHEBI:17544"/>
        <dbReference type="ChEBI" id="CHEBI:17996"/>
        <dbReference type="ChEBI" id="CHEBI:29103"/>
    </reaction>
</comment>
<comment type="catalytic activity">
    <reaction evidence="1">
        <text>Li(+)(in) + 2 hydrogencarbonate(in) + chloride(out) = Li(+)(out) + 2 hydrogencarbonate(out) + chloride(in)</text>
        <dbReference type="Rhea" id="RHEA:75063"/>
        <dbReference type="ChEBI" id="CHEBI:17544"/>
        <dbReference type="ChEBI" id="CHEBI:17996"/>
        <dbReference type="ChEBI" id="CHEBI:49713"/>
    </reaction>
</comment>
<comment type="catalytic activity">
    <reaction evidence="1">
        <text>Rb(+)(in) + 2 hydrogencarbonate(in) + chloride(out) = Rb(+)(out) + 2 hydrogencarbonate(out) + chloride(in)</text>
        <dbReference type="Rhea" id="RHEA:75067"/>
        <dbReference type="ChEBI" id="CHEBI:17544"/>
        <dbReference type="ChEBI" id="CHEBI:17996"/>
        <dbReference type="ChEBI" id="CHEBI:49847"/>
    </reaction>
</comment>
<comment type="catalytic activity">
    <reaction evidence="1">
        <text>Cs(+)(in) + 2 hydrogencarbonate(in) + chloride(out) = Cs(+)(out) + 2 hydrogencarbonate(out) + chloride(in)</text>
        <dbReference type="Rhea" id="RHEA:75071"/>
        <dbReference type="ChEBI" id="CHEBI:17544"/>
        <dbReference type="ChEBI" id="CHEBI:17996"/>
        <dbReference type="ChEBI" id="CHEBI:49547"/>
    </reaction>
</comment>
<comment type="subcellular location">
    <subcellularLocation>
        <location evidence="6">Lateral cell membrane</location>
        <topology evidence="3">Multi-pass membrane protein</topology>
    </subcellularLocation>
    <subcellularLocation>
        <location evidence="5">Apical cell membrane</location>
        <topology evidence="3">Multi-pass membrane protein</topology>
    </subcellularLocation>
    <subcellularLocation>
        <location evidence="1">Basolateral cell membrane</location>
        <topology evidence="3">Multi-pass membrane protein</topology>
    </subcellularLocation>
    <text evidence="5 6">Localized at the apical and lateral cell membrane of intercalated cells.</text>
</comment>
<comment type="alternative products">
    <event type="alternative splicing"/>
    <isoform>
        <id>Q9GKY1-1</id>
        <name>1</name>
        <name>AE4a</name>
        <sequence type="displayed"/>
    </isoform>
    <isoform>
        <id>Q9GKY1-2</id>
        <name>2</name>
        <name>AE4b</name>
        <sequence type="described" ref="VSP_007088"/>
    </isoform>
</comment>
<comment type="tissue specificity">
    <text evidence="5">Highly expressed in kidney (PubMed:11102437). Expressed in the outer medulla and the inner medulla in the kidney cortex (PubMed:11102437). Only expressed in beta-intercalated cells (PubMed:11102437).</text>
</comment>
<comment type="similarity">
    <text evidence="8">Belongs to the anion exchanger (TC 2.A.31) family.</text>
</comment>
<proteinExistence type="evidence at transcript level"/>
<accession>Q9GKY1</accession>
<accession>Q9GKY2</accession>
<feature type="chain" id="PRO_0000079224" description="Anion exchange protein 4">
    <location>
        <begin position="1"/>
        <end position="955"/>
    </location>
</feature>
<feature type="transmembrane region" description="Helical" evidence="3">
    <location>
        <begin position="387"/>
        <end position="407"/>
    </location>
</feature>
<feature type="transmembrane region" description="Helical" evidence="3">
    <location>
        <begin position="415"/>
        <end position="435"/>
    </location>
</feature>
<feature type="transmembrane region" description="Helical" evidence="3">
    <location>
        <begin position="472"/>
        <end position="492"/>
    </location>
</feature>
<feature type="transmembrane region" description="Helical" evidence="3">
    <location>
        <begin position="503"/>
        <end position="523"/>
    </location>
</feature>
<feature type="transmembrane region" description="Helical" evidence="3">
    <location>
        <begin position="596"/>
        <end position="616"/>
    </location>
</feature>
<feature type="transmembrane region" description="Helical" evidence="3">
    <location>
        <begin position="637"/>
        <end position="657"/>
    </location>
</feature>
<feature type="transmembrane region" description="Helical" evidence="3">
    <location>
        <begin position="684"/>
        <end position="704"/>
    </location>
</feature>
<feature type="transmembrane region" description="Helical" evidence="3">
    <location>
        <begin position="730"/>
        <end position="750"/>
    </location>
</feature>
<feature type="transmembrane region" description="Helical" evidence="3">
    <location>
        <begin position="785"/>
        <end position="804"/>
    </location>
</feature>
<feature type="transmembrane region" description="Helical" evidence="3">
    <location>
        <begin position="811"/>
        <end position="830"/>
    </location>
</feature>
<feature type="transmembrane region" description="Helical" evidence="3">
    <location>
        <begin position="871"/>
        <end position="891"/>
    </location>
</feature>
<feature type="region of interest" description="Disordered" evidence="4">
    <location>
        <begin position="20"/>
        <end position="50"/>
    </location>
</feature>
<feature type="region of interest" description="Disordered" evidence="4">
    <location>
        <begin position="154"/>
        <end position="190"/>
    </location>
</feature>
<feature type="region of interest" description="Disordered" evidence="4">
    <location>
        <begin position="331"/>
        <end position="352"/>
    </location>
</feature>
<feature type="region of interest" description="Membrane (anion exchange)">
    <location>
        <begin position="387"/>
        <end position="955"/>
    </location>
</feature>
<feature type="region of interest" description="Disordered" evidence="4">
    <location>
        <begin position="918"/>
        <end position="955"/>
    </location>
</feature>
<feature type="glycosylation site" description="N-linked (GlcNAc...) asparagine" evidence="3">
    <location>
        <position position="548"/>
    </location>
</feature>
<feature type="glycosylation site" description="N-linked (GlcNAc...) asparagine" evidence="3">
    <location>
        <position position="572"/>
    </location>
</feature>
<feature type="glycosylation site" description="N-linked (GlcNAc...) asparagine" evidence="3">
    <location>
        <position position="951"/>
    </location>
</feature>
<feature type="splice variant" id="VSP_007088" description="In isoform 2." evidence="7">
    <location>
        <begin position="317"/>
        <end position="332"/>
    </location>
</feature>
<evidence type="ECO:0000250" key="1">
    <source>
        <dbReference type="UniProtKB" id="A0A494BA31"/>
    </source>
</evidence>
<evidence type="ECO:0000250" key="2">
    <source>
        <dbReference type="UniProtKB" id="Q96Q91"/>
    </source>
</evidence>
<evidence type="ECO:0000255" key="3"/>
<evidence type="ECO:0000256" key="4">
    <source>
        <dbReference type="SAM" id="MobiDB-lite"/>
    </source>
</evidence>
<evidence type="ECO:0000269" key="5">
    <source>
    </source>
</evidence>
<evidence type="ECO:0000269" key="6">
    <source>
    </source>
</evidence>
<evidence type="ECO:0000303" key="7">
    <source>
    </source>
</evidence>
<evidence type="ECO:0000305" key="8"/>
<protein>
    <recommendedName>
        <fullName>Anion exchange protein 4</fullName>
        <shortName>AE 4</shortName>
        <shortName>Anion exchanger 4</shortName>
    </recommendedName>
    <alternativeName>
        <fullName evidence="2">Solute carrier family 4 member 9</fullName>
    </alternativeName>
</protein>
<reference key="1">
    <citation type="journal article" date="2001" name="J. Biol. Chem.">
        <title>A new member of the HCO3-transporter superfamily is an apical anion exchanger of beta-intercalated cells in the kidney.</title>
        <authorList>
            <person name="Tsuganezawa H."/>
            <person name="Kobayashi K."/>
            <person name="Iyori M."/>
            <person name="Araki T."/>
            <person name="Koizumi A."/>
            <person name="Watanabe S."/>
            <person name="Kaneko A."/>
            <person name="Fukao T."/>
            <person name="Monkawa T."/>
            <person name="Yoshida T."/>
            <person name="Kim D.K."/>
            <person name="Kanai Y."/>
            <person name="Endou H."/>
            <person name="Hayashi M."/>
            <person name="Saruta T."/>
        </authorList>
    </citation>
    <scope>NUCLEOTIDE SEQUENCE [MRNA] (ISOFORMS 1 AND 2)</scope>
    <scope>FUNCTION</scope>
    <scope>SUBCELLULAR LOCATION</scope>
    <scope>TISSUE SPECIFICITY</scope>
    <source>
        <tissue>Kidney</tissue>
    </source>
</reference>
<reference key="2">
    <citation type="journal article" date="2002" name="Am. J. Physiol.">
        <title>AE4 is a DIDS-sensitive Cl(-)/HCO(-)(3) exchanger in the basolateral membrane of the renal CCD and the SMG duct.</title>
        <authorList>
            <person name="Ko S.B.H."/>
            <person name="Luo X."/>
            <person name="Hager H."/>
            <person name="Rojek A."/>
            <person name="Choi J.Y."/>
            <person name="Licht C."/>
            <person name="Suzuki M."/>
            <person name="Muallem S."/>
            <person name="Nielsen S."/>
            <person name="Ishibashi K."/>
        </authorList>
    </citation>
    <scope>SUBCELLULAR LOCATION</scope>
    <source>
        <tissue>Kidney</tissue>
    </source>
</reference>
<keyword id="KW-0025">Alternative splicing</keyword>
<keyword id="KW-0039">Anion exchange</keyword>
<keyword id="KW-0050">Antiport</keyword>
<keyword id="KW-1003">Cell membrane</keyword>
<keyword id="KW-0325">Glycoprotein</keyword>
<keyword id="KW-0406">Ion transport</keyword>
<keyword id="KW-0472">Membrane</keyword>
<keyword id="KW-1185">Reference proteome</keyword>
<keyword id="KW-0812">Transmembrane</keyword>
<keyword id="KW-1133">Transmembrane helix</keyword>
<keyword id="KW-0813">Transport</keyword>
<organism>
    <name type="scientific">Oryctolagus cuniculus</name>
    <name type="common">Rabbit</name>
    <dbReference type="NCBI Taxonomy" id="9986"/>
    <lineage>
        <taxon>Eukaryota</taxon>
        <taxon>Metazoa</taxon>
        <taxon>Chordata</taxon>
        <taxon>Craniata</taxon>
        <taxon>Vertebrata</taxon>
        <taxon>Euteleostomi</taxon>
        <taxon>Mammalia</taxon>
        <taxon>Eutheria</taxon>
        <taxon>Euarchontoglires</taxon>
        <taxon>Glires</taxon>
        <taxon>Lagomorpha</taxon>
        <taxon>Leporidae</taxon>
        <taxon>Oryctolagus</taxon>
    </lineage>
</organism>